<sequence length="231" mass="26688">MEKIVGIVVAAGKSKRFGEDKLLINIKGMPIVYYSIRKLHDIKDIEKIILVVRNEMLEYYKEKIKDWKLEKVYKLVLGGEERQDSVYNALKSVDFHCDYVLIHDAARPFVSIKKIEELIKFCTENSLSAILGIPVKDTIKVVDNTTKRIMETLDRSKLWIIQTPQMFPFEIIKEAHKKAREENFVGTDDASLVERLGIPVYVIEGEPFNIKITTKDDLLWMEGILSKSELV</sequence>
<gene>
    <name evidence="1" type="primary">ispD</name>
    <name type="ordered locus">DICTH_1366</name>
</gene>
<dbReference type="EC" id="2.7.7.60" evidence="1"/>
<dbReference type="EMBL" id="CP001146">
    <property type="protein sequence ID" value="ACI18608.1"/>
    <property type="molecule type" value="Genomic_DNA"/>
</dbReference>
<dbReference type="RefSeq" id="WP_012547240.1">
    <property type="nucleotide sequence ID" value="NC_011297.1"/>
</dbReference>
<dbReference type="SMR" id="B5YF77"/>
<dbReference type="STRING" id="309799.DICTH_1366"/>
<dbReference type="PaxDb" id="309799-DICTH_1366"/>
<dbReference type="KEGG" id="dth:DICTH_1366"/>
<dbReference type="eggNOG" id="COG1211">
    <property type="taxonomic scope" value="Bacteria"/>
</dbReference>
<dbReference type="HOGENOM" id="CLU_061281_2_2_0"/>
<dbReference type="OrthoDB" id="9806837at2"/>
<dbReference type="UniPathway" id="UPA00056">
    <property type="reaction ID" value="UER00093"/>
</dbReference>
<dbReference type="Proteomes" id="UP000001733">
    <property type="component" value="Chromosome"/>
</dbReference>
<dbReference type="GO" id="GO:0050518">
    <property type="term" value="F:2-C-methyl-D-erythritol 4-phosphate cytidylyltransferase activity"/>
    <property type="evidence" value="ECO:0007669"/>
    <property type="project" value="UniProtKB-UniRule"/>
</dbReference>
<dbReference type="GO" id="GO:0019288">
    <property type="term" value="P:isopentenyl diphosphate biosynthetic process, methylerythritol 4-phosphate pathway"/>
    <property type="evidence" value="ECO:0007669"/>
    <property type="project" value="UniProtKB-UniRule"/>
</dbReference>
<dbReference type="CDD" id="cd02516">
    <property type="entry name" value="CDP-ME_synthetase"/>
    <property type="match status" value="1"/>
</dbReference>
<dbReference type="FunFam" id="3.90.550.10:FF:000003">
    <property type="entry name" value="2-C-methyl-D-erythritol 4-phosphate cytidylyltransferase"/>
    <property type="match status" value="1"/>
</dbReference>
<dbReference type="Gene3D" id="3.90.550.10">
    <property type="entry name" value="Spore Coat Polysaccharide Biosynthesis Protein SpsA, Chain A"/>
    <property type="match status" value="1"/>
</dbReference>
<dbReference type="HAMAP" id="MF_00108">
    <property type="entry name" value="IspD"/>
    <property type="match status" value="1"/>
</dbReference>
<dbReference type="InterPro" id="IPR001228">
    <property type="entry name" value="IspD"/>
</dbReference>
<dbReference type="InterPro" id="IPR034683">
    <property type="entry name" value="IspD/TarI"/>
</dbReference>
<dbReference type="InterPro" id="IPR050088">
    <property type="entry name" value="IspD/TarI_cytidylyltransf_bact"/>
</dbReference>
<dbReference type="InterPro" id="IPR018294">
    <property type="entry name" value="ISPD_synthase_CS"/>
</dbReference>
<dbReference type="InterPro" id="IPR029044">
    <property type="entry name" value="Nucleotide-diphossugar_trans"/>
</dbReference>
<dbReference type="NCBIfam" id="TIGR00453">
    <property type="entry name" value="ispD"/>
    <property type="match status" value="1"/>
</dbReference>
<dbReference type="PANTHER" id="PTHR32125">
    <property type="entry name" value="2-C-METHYL-D-ERYTHRITOL 4-PHOSPHATE CYTIDYLYLTRANSFERASE, CHLOROPLASTIC"/>
    <property type="match status" value="1"/>
</dbReference>
<dbReference type="PANTHER" id="PTHR32125:SF4">
    <property type="entry name" value="2-C-METHYL-D-ERYTHRITOL 4-PHOSPHATE CYTIDYLYLTRANSFERASE, CHLOROPLASTIC"/>
    <property type="match status" value="1"/>
</dbReference>
<dbReference type="Pfam" id="PF01128">
    <property type="entry name" value="IspD"/>
    <property type="match status" value="1"/>
</dbReference>
<dbReference type="SUPFAM" id="SSF53448">
    <property type="entry name" value="Nucleotide-diphospho-sugar transferases"/>
    <property type="match status" value="1"/>
</dbReference>
<dbReference type="PROSITE" id="PS01295">
    <property type="entry name" value="ISPD"/>
    <property type="match status" value="1"/>
</dbReference>
<accession>B5YF77</accession>
<evidence type="ECO:0000255" key="1">
    <source>
        <dbReference type="HAMAP-Rule" id="MF_00108"/>
    </source>
</evidence>
<comment type="function">
    <text evidence="1">Catalyzes the formation of 4-diphosphocytidyl-2-C-methyl-D-erythritol from CTP and 2-C-methyl-D-erythritol 4-phosphate (MEP).</text>
</comment>
<comment type="catalytic activity">
    <reaction evidence="1">
        <text>2-C-methyl-D-erythritol 4-phosphate + CTP + H(+) = 4-CDP-2-C-methyl-D-erythritol + diphosphate</text>
        <dbReference type="Rhea" id="RHEA:13429"/>
        <dbReference type="ChEBI" id="CHEBI:15378"/>
        <dbReference type="ChEBI" id="CHEBI:33019"/>
        <dbReference type="ChEBI" id="CHEBI:37563"/>
        <dbReference type="ChEBI" id="CHEBI:57823"/>
        <dbReference type="ChEBI" id="CHEBI:58262"/>
        <dbReference type="EC" id="2.7.7.60"/>
    </reaction>
</comment>
<comment type="pathway">
    <text evidence="1">Isoprenoid biosynthesis; isopentenyl diphosphate biosynthesis via DXP pathway; isopentenyl diphosphate from 1-deoxy-D-xylulose 5-phosphate: step 2/6.</text>
</comment>
<comment type="similarity">
    <text evidence="1">Belongs to the IspD/TarI cytidylyltransferase family. IspD subfamily.</text>
</comment>
<name>ISPD_DICT6</name>
<feature type="chain" id="PRO_1000094326" description="2-C-methyl-D-erythritol 4-phosphate cytidylyltransferase">
    <location>
        <begin position="1"/>
        <end position="231"/>
    </location>
</feature>
<feature type="site" description="Transition state stabilizer" evidence="1">
    <location>
        <position position="16"/>
    </location>
</feature>
<feature type="site" description="Transition state stabilizer" evidence="1">
    <location>
        <position position="21"/>
    </location>
</feature>
<feature type="site" description="Positions MEP for the nucleophilic attack" evidence="1">
    <location>
        <position position="155"/>
    </location>
</feature>
<feature type="site" description="Positions MEP for the nucleophilic attack" evidence="1">
    <location>
        <position position="211"/>
    </location>
</feature>
<proteinExistence type="inferred from homology"/>
<keyword id="KW-0414">Isoprene biosynthesis</keyword>
<keyword id="KW-0548">Nucleotidyltransferase</keyword>
<keyword id="KW-0808">Transferase</keyword>
<reference key="1">
    <citation type="journal article" date="2014" name="Genome Announc.">
        <title>Complete Genome Sequence of the Extreme Thermophile Dictyoglomus thermophilum H-6-12.</title>
        <authorList>
            <person name="Coil D.A."/>
            <person name="Badger J.H."/>
            <person name="Forberger H.C."/>
            <person name="Riggs F."/>
            <person name="Madupu R."/>
            <person name="Fedorova N."/>
            <person name="Ward N."/>
            <person name="Robb F.T."/>
            <person name="Eisen J.A."/>
        </authorList>
    </citation>
    <scope>NUCLEOTIDE SEQUENCE [LARGE SCALE GENOMIC DNA]</scope>
    <source>
        <strain>ATCC 35947 / DSM 3960 / H-6-12</strain>
    </source>
</reference>
<protein>
    <recommendedName>
        <fullName evidence="1">2-C-methyl-D-erythritol 4-phosphate cytidylyltransferase</fullName>
        <ecNumber evidence="1">2.7.7.60</ecNumber>
    </recommendedName>
    <alternativeName>
        <fullName evidence="1">4-diphosphocytidyl-2C-methyl-D-erythritol synthase</fullName>
    </alternativeName>
    <alternativeName>
        <fullName evidence="1">MEP cytidylyltransferase</fullName>
        <shortName evidence="1">MCT</shortName>
    </alternativeName>
</protein>
<organism>
    <name type="scientific">Dictyoglomus thermophilum (strain ATCC 35947 / DSM 3960 / H-6-12)</name>
    <dbReference type="NCBI Taxonomy" id="309799"/>
    <lineage>
        <taxon>Bacteria</taxon>
        <taxon>Pseudomonadati</taxon>
        <taxon>Dictyoglomota</taxon>
        <taxon>Dictyoglomia</taxon>
        <taxon>Dictyoglomales</taxon>
        <taxon>Dictyoglomaceae</taxon>
        <taxon>Dictyoglomus</taxon>
    </lineage>
</organism>